<dbReference type="EMBL" id="CP000679">
    <property type="protein sequence ID" value="ABP66893.1"/>
    <property type="molecule type" value="Genomic_DNA"/>
</dbReference>
<dbReference type="RefSeq" id="WP_011916829.1">
    <property type="nucleotide sequence ID" value="NC_009437.1"/>
</dbReference>
<dbReference type="SMR" id="A4XJ08"/>
<dbReference type="STRING" id="351627.Csac_1291"/>
<dbReference type="GeneID" id="31773487"/>
<dbReference type="KEGG" id="csc:Csac_1291"/>
<dbReference type="eggNOG" id="COG0234">
    <property type="taxonomic scope" value="Bacteria"/>
</dbReference>
<dbReference type="HOGENOM" id="CLU_132825_2_0_9"/>
<dbReference type="OrthoDB" id="9806791at2"/>
<dbReference type="Proteomes" id="UP000000256">
    <property type="component" value="Chromosome"/>
</dbReference>
<dbReference type="GO" id="GO:0005737">
    <property type="term" value="C:cytoplasm"/>
    <property type="evidence" value="ECO:0007669"/>
    <property type="project" value="UniProtKB-SubCell"/>
</dbReference>
<dbReference type="GO" id="GO:0005524">
    <property type="term" value="F:ATP binding"/>
    <property type="evidence" value="ECO:0007669"/>
    <property type="project" value="InterPro"/>
</dbReference>
<dbReference type="GO" id="GO:0046872">
    <property type="term" value="F:metal ion binding"/>
    <property type="evidence" value="ECO:0007669"/>
    <property type="project" value="TreeGrafter"/>
</dbReference>
<dbReference type="GO" id="GO:0044183">
    <property type="term" value="F:protein folding chaperone"/>
    <property type="evidence" value="ECO:0007669"/>
    <property type="project" value="InterPro"/>
</dbReference>
<dbReference type="GO" id="GO:0051087">
    <property type="term" value="F:protein-folding chaperone binding"/>
    <property type="evidence" value="ECO:0007669"/>
    <property type="project" value="TreeGrafter"/>
</dbReference>
<dbReference type="GO" id="GO:0051082">
    <property type="term" value="F:unfolded protein binding"/>
    <property type="evidence" value="ECO:0007669"/>
    <property type="project" value="TreeGrafter"/>
</dbReference>
<dbReference type="GO" id="GO:0051085">
    <property type="term" value="P:chaperone cofactor-dependent protein refolding"/>
    <property type="evidence" value="ECO:0007669"/>
    <property type="project" value="TreeGrafter"/>
</dbReference>
<dbReference type="CDD" id="cd00320">
    <property type="entry name" value="cpn10"/>
    <property type="match status" value="1"/>
</dbReference>
<dbReference type="FunFam" id="2.30.33.40:FF:000001">
    <property type="entry name" value="10 kDa chaperonin"/>
    <property type="match status" value="1"/>
</dbReference>
<dbReference type="Gene3D" id="2.30.33.40">
    <property type="entry name" value="GroES chaperonin"/>
    <property type="match status" value="1"/>
</dbReference>
<dbReference type="HAMAP" id="MF_00580">
    <property type="entry name" value="CH10"/>
    <property type="match status" value="1"/>
</dbReference>
<dbReference type="InterPro" id="IPR020818">
    <property type="entry name" value="Chaperonin_GroES"/>
</dbReference>
<dbReference type="InterPro" id="IPR037124">
    <property type="entry name" value="Chaperonin_GroES_sf"/>
</dbReference>
<dbReference type="InterPro" id="IPR018369">
    <property type="entry name" value="Chaprnonin_Cpn10_CS"/>
</dbReference>
<dbReference type="InterPro" id="IPR011032">
    <property type="entry name" value="GroES-like_sf"/>
</dbReference>
<dbReference type="NCBIfam" id="NF001531">
    <property type="entry name" value="PRK00364.2-2"/>
    <property type="match status" value="1"/>
</dbReference>
<dbReference type="NCBIfam" id="NF001533">
    <property type="entry name" value="PRK00364.2-4"/>
    <property type="match status" value="1"/>
</dbReference>
<dbReference type="PANTHER" id="PTHR10772">
    <property type="entry name" value="10 KDA HEAT SHOCK PROTEIN"/>
    <property type="match status" value="1"/>
</dbReference>
<dbReference type="PANTHER" id="PTHR10772:SF58">
    <property type="entry name" value="CO-CHAPERONIN GROES"/>
    <property type="match status" value="1"/>
</dbReference>
<dbReference type="Pfam" id="PF00166">
    <property type="entry name" value="Cpn10"/>
    <property type="match status" value="1"/>
</dbReference>
<dbReference type="PRINTS" id="PR00297">
    <property type="entry name" value="CHAPERONIN10"/>
</dbReference>
<dbReference type="SMART" id="SM00883">
    <property type="entry name" value="Cpn10"/>
    <property type="match status" value="1"/>
</dbReference>
<dbReference type="SUPFAM" id="SSF50129">
    <property type="entry name" value="GroES-like"/>
    <property type="match status" value="1"/>
</dbReference>
<dbReference type="PROSITE" id="PS00681">
    <property type="entry name" value="CHAPERONINS_CPN10"/>
    <property type="match status" value="1"/>
</dbReference>
<proteinExistence type="inferred from homology"/>
<name>CH10_CALS8</name>
<gene>
    <name evidence="1" type="primary">groES</name>
    <name evidence="1" type="synonym">groS</name>
    <name type="ordered locus">Csac_1291</name>
</gene>
<evidence type="ECO:0000255" key="1">
    <source>
        <dbReference type="HAMAP-Rule" id="MF_00580"/>
    </source>
</evidence>
<keyword id="KW-0143">Chaperone</keyword>
<keyword id="KW-0963">Cytoplasm</keyword>
<comment type="function">
    <text evidence="1">Together with the chaperonin GroEL, plays an essential role in assisting protein folding. The GroEL-GroES system forms a nano-cage that allows encapsulation of the non-native substrate proteins and provides a physical environment optimized to promote and accelerate protein folding. GroES binds to the apical surface of the GroEL ring, thereby capping the opening of the GroEL channel.</text>
</comment>
<comment type="subunit">
    <text evidence="1">Heptamer of 7 subunits arranged in a ring. Interacts with the chaperonin GroEL.</text>
</comment>
<comment type="subcellular location">
    <subcellularLocation>
        <location evidence="1">Cytoplasm</location>
    </subcellularLocation>
</comment>
<comment type="similarity">
    <text evidence="1">Belongs to the GroES chaperonin family.</text>
</comment>
<accession>A4XJ08</accession>
<reference key="1">
    <citation type="submission" date="2007-04" db="EMBL/GenBank/DDBJ databases">
        <title>Genome sequence of the thermophilic hydrogen-producing bacterium Caldicellulosiruptor saccharolyticus DSM 8903.</title>
        <authorList>
            <person name="Copeland A."/>
            <person name="Lucas S."/>
            <person name="Lapidus A."/>
            <person name="Barry K."/>
            <person name="Detter J.C."/>
            <person name="Glavina del Rio T."/>
            <person name="Hammon N."/>
            <person name="Israni S."/>
            <person name="Dalin E."/>
            <person name="Tice H."/>
            <person name="Pitluck S."/>
            <person name="Kiss H."/>
            <person name="Brettin T."/>
            <person name="Bruce D."/>
            <person name="Han C."/>
            <person name="Schmutz J."/>
            <person name="Larimer F."/>
            <person name="Land M."/>
            <person name="Hauser L."/>
            <person name="Kyrpides N."/>
            <person name="Lykidis A."/>
            <person name="van de Werken H.J.G."/>
            <person name="Verhaart M.R.A."/>
            <person name="VanFossen A.L."/>
            <person name="Lewis D.L."/>
            <person name="Nichols J.D."/>
            <person name="Goorissen H.P."/>
            <person name="van Niel E.W.J."/>
            <person name="Stams F.J.M."/>
            <person name="Willquist K.U."/>
            <person name="Ward D.E."/>
            <person name="van der Oost J."/>
            <person name="Kelly R.M."/>
            <person name="Kengen S.M.W."/>
            <person name="Richardson P."/>
        </authorList>
    </citation>
    <scope>NUCLEOTIDE SEQUENCE [LARGE SCALE GENOMIC DNA]</scope>
    <source>
        <strain>ATCC 43494 / DSM 8903 / Tp8T 6331</strain>
    </source>
</reference>
<feature type="chain" id="PRO_1000025225" description="Co-chaperonin GroES">
    <location>
        <begin position="1"/>
        <end position="95"/>
    </location>
</feature>
<protein>
    <recommendedName>
        <fullName evidence="1">Co-chaperonin GroES</fullName>
    </recommendedName>
    <alternativeName>
        <fullName evidence="1">10 kDa chaperonin</fullName>
    </alternativeName>
    <alternativeName>
        <fullName evidence="1">Chaperonin-10</fullName>
        <shortName evidence="1">Cpn10</shortName>
    </alternativeName>
</protein>
<organism>
    <name type="scientific">Caldicellulosiruptor saccharolyticus (strain ATCC 43494 / DSM 8903 / Tp8T 6331)</name>
    <dbReference type="NCBI Taxonomy" id="351627"/>
    <lineage>
        <taxon>Bacteria</taxon>
        <taxon>Bacillati</taxon>
        <taxon>Bacillota</taxon>
        <taxon>Bacillota incertae sedis</taxon>
        <taxon>Caldicellulosiruptorales</taxon>
        <taxon>Caldicellulosiruptoraceae</taxon>
        <taxon>Caldicellulosiruptor</taxon>
    </lineage>
</organism>
<sequence length="95" mass="10563">MKIRPIGDRILIKFKEREEVTKSGIVLPDTVKEKPQIAEVIEVGPGGIVDGEKVEMVVKKGDKVIVSKYAGTEIKIDGEEYTIIRQDDVLAIIED</sequence>